<organism>
    <name type="scientific">Shewanella woodyi (strain ATCC 51908 / MS32)</name>
    <dbReference type="NCBI Taxonomy" id="392500"/>
    <lineage>
        <taxon>Bacteria</taxon>
        <taxon>Pseudomonadati</taxon>
        <taxon>Pseudomonadota</taxon>
        <taxon>Gammaproteobacteria</taxon>
        <taxon>Alteromonadales</taxon>
        <taxon>Shewanellaceae</taxon>
        <taxon>Shewanella</taxon>
    </lineage>
</organism>
<proteinExistence type="inferred from homology"/>
<accession>B1KQ45</accession>
<name>MNMG_SHEWM</name>
<gene>
    <name evidence="1" type="primary">mnmG</name>
    <name evidence="1" type="synonym">gidA</name>
    <name type="ordered locus">Swoo_4909</name>
</gene>
<sequence length="630" mass="69639">MHFHERFDVIVIGGGHAGTEAALAAARMGSKTLLLTHNIDTLGQMSCNPAIGGIGKGHLVKEIDALGGAMAIATDYAGIQFRTLNSSKGPAVRATRAQADRALYRAKIQEILQNQPNLRLFQQAVDDLIVENGRVTGVVTQMGLAFEAPAVVLTAGTFLSGKIHIGMQNYSGGRAGDPPSIALADRLRELPIRIGRLKTGTPPRIDANTINFDLMTEQKGDTPLPVMSFIGDVSQHPKQISCFVTHTNEKTHDIIRGGLDRSPMYSGVIEGVGPRYCPSIEDKIHRFADKSSHQIFIEPEGLNTNEIYPNGISTSLPFDVQLNLVRSIKGMENAEIIRPGYAIEYDYFDPRDLKNSLETKSIDGLFFAGQINGTTGYEEAGAQGLLAGMNASLQVQGKEIWCPRRDEAYLGVLVDDLSTLGTKEPYRMFTSRAEYRLLLREDNADLRLTEKGREIGLVDDERWAKFSEKRESIELELQRLRSQWVHPNSPLIDVLNPELNTPISREASFEDLLRRPEMDYPKLMSLEGFGPGLDDPRAAEQVQIQVKYSGYIQRQQDEIDKAIRHETTGLPLDLDYQEVPGLSNEVIAKLNDHKPETIGQASRISGMTPAAISILLVHLKRRGLLRKKAS</sequence>
<dbReference type="EMBL" id="CP000961">
    <property type="protein sequence ID" value="ACA89158.1"/>
    <property type="molecule type" value="Genomic_DNA"/>
</dbReference>
<dbReference type="RefSeq" id="WP_012327474.1">
    <property type="nucleotide sequence ID" value="NC_010506.1"/>
</dbReference>
<dbReference type="SMR" id="B1KQ45"/>
<dbReference type="STRING" id="392500.Swoo_4909"/>
<dbReference type="KEGG" id="swd:Swoo_4909"/>
<dbReference type="eggNOG" id="COG0445">
    <property type="taxonomic scope" value="Bacteria"/>
</dbReference>
<dbReference type="HOGENOM" id="CLU_007831_2_2_6"/>
<dbReference type="Proteomes" id="UP000002168">
    <property type="component" value="Chromosome"/>
</dbReference>
<dbReference type="GO" id="GO:0005829">
    <property type="term" value="C:cytosol"/>
    <property type="evidence" value="ECO:0007669"/>
    <property type="project" value="TreeGrafter"/>
</dbReference>
<dbReference type="GO" id="GO:0050660">
    <property type="term" value="F:flavin adenine dinucleotide binding"/>
    <property type="evidence" value="ECO:0007669"/>
    <property type="project" value="UniProtKB-UniRule"/>
</dbReference>
<dbReference type="GO" id="GO:0030488">
    <property type="term" value="P:tRNA methylation"/>
    <property type="evidence" value="ECO:0007669"/>
    <property type="project" value="TreeGrafter"/>
</dbReference>
<dbReference type="GO" id="GO:0002098">
    <property type="term" value="P:tRNA wobble uridine modification"/>
    <property type="evidence" value="ECO:0007669"/>
    <property type="project" value="InterPro"/>
</dbReference>
<dbReference type="FunFam" id="1.10.10.1800:FF:000001">
    <property type="entry name" value="tRNA uridine 5-carboxymethylaminomethyl modification enzyme MnmG"/>
    <property type="match status" value="1"/>
</dbReference>
<dbReference type="FunFam" id="1.10.150.570:FF:000001">
    <property type="entry name" value="tRNA uridine 5-carboxymethylaminomethyl modification enzyme MnmG"/>
    <property type="match status" value="1"/>
</dbReference>
<dbReference type="FunFam" id="3.50.50.60:FF:000002">
    <property type="entry name" value="tRNA uridine 5-carboxymethylaminomethyl modification enzyme MnmG"/>
    <property type="match status" value="1"/>
</dbReference>
<dbReference type="FunFam" id="3.50.50.60:FF:000010">
    <property type="entry name" value="tRNA uridine 5-carboxymethylaminomethyl modification enzyme MnmG"/>
    <property type="match status" value="1"/>
</dbReference>
<dbReference type="Gene3D" id="3.50.50.60">
    <property type="entry name" value="FAD/NAD(P)-binding domain"/>
    <property type="match status" value="2"/>
</dbReference>
<dbReference type="Gene3D" id="1.10.150.570">
    <property type="entry name" value="GidA associated domain, C-terminal subdomain"/>
    <property type="match status" value="1"/>
</dbReference>
<dbReference type="Gene3D" id="1.10.10.1800">
    <property type="entry name" value="tRNA uridine 5-carboxymethylaminomethyl modification enzyme MnmG/GidA"/>
    <property type="match status" value="1"/>
</dbReference>
<dbReference type="HAMAP" id="MF_00129">
    <property type="entry name" value="MnmG_GidA"/>
    <property type="match status" value="1"/>
</dbReference>
<dbReference type="InterPro" id="IPR036188">
    <property type="entry name" value="FAD/NAD-bd_sf"/>
</dbReference>
<dbReference type="InterPro" id="IPR049312">
    <property type="entry name" value="GIDA_C_N"/>
</dbReference>
<dbReference type="InterPro" id="IPR004416">
    <property type="entry name" value="MnmG"/>
</dbReference>
<dbReference type="InterPro" id="IPR002218">
    <property type="entry name" value="MnmG-rel"/>
</dbReference>
<dbReference type="InterPro" id="IPR020595">
    <property type="entry name" value="MnmG-rel_CS"/>
</dbReference>
<dbReference type="InterPro" id="IPR026904">
    <property type="entry name" value="MnmG_C"/>
</dbReference>
<dbReference type="InterPro" id="IPR047001">
    <property type="entry name" value="MnmG_C_subdom"/>
</dbReference>
<dbReference type="InterPro" id="IPR044920">
    <property type="entry name" value="MnmG_C_subdom_sf"/>
</dbReference>
<dbReference type="InterPro" id="IPR040131">
    <property type="entry name" value="MnmG_N"/>
</dbReference>
<dbReference type="NCBIfam" id="TIGR00136">
    <property type="entry name" value="mnmG_gidA"/>
    <property type="match status" value="1"/>
</dbReference>
<dbReference type="PANTHER" id="PTHR11806">
    <property type="entry name" value="GLUCOSE INHIBITED DIVISION PROTEIN A"/>
    <property type="match status" value="1"/>
</dbReference>
<dbReference type="PANTHER" id="PTHR11806:SF0">
    <property type="entry name" value="PROTEIN MTO1 HOMOLOG, MITOCHONDRIAL"/>
    <property type="match status" value="1"/>
</dbReference>
<dbReference type="Pfam" id="PF01134">
    <property type="entry name" value="GIDA"/>
    <property type="match status" value="1"/>
</dbReference>
<dbReference type="Pfam" id="PF21680">
    <property type="entry name" value="GIDA_C_1st"/>
    <property type="match status" value="1"/>
</dbReference>
<dbReference type="Pfam" id="PF13932">
    <property type="entry name" value="SAM_GIDA_C"/>
    <property type="match status" value="1"/>
</dbReference>
<dbReference type="PRINTS" id="PR00368">
    <property type="entry name" value="FADPNR"/>
</dbReference>
<dbReference type="SMART" id="SM01228">
    <property type="entry name" value="GIDA_assoc_3"/>
    <property type="match status" value="1"/>
</dbReference>
<dbReference type="SUPFAM" id="SSF51905">
    <property type="entry name" value="FAD/NAD(P)-binding domain"/>
    <property type="match status" value="1"/>
</dbReference>
<dbReference type="PROSITE" id="PS01280">
    <property type="entry name" value="GIDA_1"/>
    <property type="match status" value="1"/>
</dbReference>
<dbReference type="PROSITE" id="PS01281">
    <property type="entry name" value="GIDA_2"/>
    <property type="match status" value="1"/>
</dbReference>
<reference key="1">
    <citation type="submission" date="2008-02" db="EMBL/GenBank/DDBJ databases">
        <title>Complete sequence of Shewanella woodyi ATCC 51908.</title>
        <authorList>
            <consortium name="US DOE Joint Genome Institute"/>
            <person name="Copeland A."/>
            <person name="Lucas S."/>
            <person name="Lapidus A."/>
            <person name="Glavina del Rio T."/>
            <person name="Dalin E."/>
            <person name="Tice H."/>
            <person name="Bruce D."/>
            <person name="Goodwin L."/>
            <person name="Pitluck S."/>
            <person name="Sims D."/>
            <person name="Brettin T."/>
            <person name="Detter J.C."/>
            <person name="Han C."/>
            <person name="Kuske C.R."/>
            <person name="Schmutz J."/>
            <person name="Larimer F."/>
            <person name="Land M."/>
            <person name="Hauser L."/>
            <person name="Kyrpides N."/>
            <person name="Lykidis A."/>
            <person name="Zhao J.-S."/>
            <person name="Richardson P."/>
        </authorList>
    </citation>
    <scope>NUCLEOTIDE SEQUENCE [LARGE SCALE GENOMIC DNA]</scope>
    <source>
        <strain>ATCC 51908 / MS32</strain>
    </source>
</reference>
<feature type="chain" id="PRO_0000345332" description="tRNA uridine 5-carboxymethylaminomethyl modification enzyme MnmG">
    <location>
        <begin position="1"/>
        <end position="630"/>
    </location>
</feature>
<feature type="binding site" evidence="1">
    <location>
        <begin position="13"/>
        <end position="18"/>
    </location>
    <ligand>
        <name>FAD</name>
        <dbReference type="ChEBI" id="CHEBI:57692"/>
    </ligand>
</feature>
<feature type="binding site" evidence="1">
    <location>
        <position position="125"/>
    </location>
    <ligand>
        <name>FAD</name>
        <dbReference type="ChEBI" id="CHEBI:57692"/>
    </ligand>
</feature>
<feature type="binding site" evidence="1">
    <location>
        <position position="180"/>
    </location>
    <ligand>
        <name>FAD</name>
        <dbReference type="ChEBI" id="CHEBI:57692"/>
    </ligand>
</feature>
<feature type="binding site" evidence="1">
    <location>
        <begin position="273"/>
        <end position="287"/>
    </location>
    <ligand>
        <name>NAD(+)</name>
        <dbReference type="ChEBI" id="CHEBI:57540"/>
    </ligand>
</feature>
<feature type="binding site" evidence="1">
    <location>
        <position position="370"/>
    </location>
    <ligand>
        <name>FAD</name>
        <dbReference type="ChEBI" id="CHEBI:57692"/>
    </ligand>
</feature>
<evidence type="ECO:0000255" key="1">
    <source>
        <dbReference type="HAMAP-Rule" id="MF_00129"/>
    </source>
</evidence>
<protein>
    <recommendedName>
        <fullName evidence="1">tRNA uridine 5-carboxymethylaminomethyl modification enzyme MnmG</fullName>
    </recommendedName>
    <alternativeName>
        <fullName evidence="1">Glucose-inhibited division protein A</fullName>
    </alternativeName>
</protein>
<comment type="function">
    <text evidence="1">NAD-binding protein involved in the addition of a carboxymethylaminomethyl (cmnm) group at the wobble position (U34) of certain tRNAs, forming tRNA-cmnm(5)s(2)U34.</text>
</comment>
<comment type="cofactor">
    <cofactor evidence="1">
        <name>FAD</name>
        <dbReference type="ChEBI" id="CHEBI:57692"/>
    </cofactor>
</comment>
<comment type="subunit">
    <text evidence="1">Homodimer. Heterotetramer of two MnmE and two MnmG subunits.</text>
</comment>
<comment type="subcellular location">
    <subcellularLocation>
        <location evidence="1">Cytoplasm</location>
    </subcellularLocation>
</comment>
<comment type="similarity">
    <text evidence="1">Belongs to the MnmG family.</text>
</comment>
<keyword id="KW-0963">Cytoplasm</keyword>
<keyword id="KW-0274">FAD</keyword>
<keyword id="KW-0285">Flavoprotein</keyword>
<keyword id="KW-0520">NAD</keyword>
<keyword id="KW-1185">Reference proteome</keyword>
<keyword id="KW-0819">tRNA processing</keyword>